<gene>
    <name evidence="1" type="primary">rplI</name>
    <name type="ordered locus">SBO_4251</name>
</gene>
<protein>
    <recommendedName>
        <fullName evidence="1">Large ribosomal subunit protein bL9</fullName>
    </recommendedName>
    <alternativeName>
        <fullName evidence="2">50S ribosomal protein L9</fullName>
    </alternativeName>
</protein>
<dbReference type="EMBL" id="CP000036">
    <property type="protein sequence ID" value="ABB68674.1"/>
    <property type="molecule type" value="Genomic_DNA"/>
</dbReference>
<dbReference type="RefSeq" id="WP_001196062.1">
    <property type="nucleotide sequence ID" value="NC_007613.1"/>
</dbReference>
<dbReference type="SMR" id="Q31TD4"/>
<dbReference type="GeneID" id="93777620"/>
<dbReference type="KEGG" id="sbo:SBO_4251"/>
<dbReference type="HOGENOM" id="CLU_078938_4_1_6"/>
<dbReference type="Proteomes" id="UP000007067">
    <property type="component" value="Chromosome"/>
</dbReference>
<dbReference type="GO" id="GO:1990904">
    <property type="term" value="C:ribonucleoprotein complex"/>
    <property type="evidence" value="ECO:0007669"/>
    <property type="project" value="UniProtKB-KW"/>
</dbReference>
<dbReference type="GO" id="GO:0005840">
    <property type="term" value="C:ribosome"/>
    <property type="evidence" value="ECO:0007669"/>
    <property type="project" value="UniProtKB-KW"/>
</dbReference>
<dbReference type="GO" id="GO:0019843">
    <property type="term" value="F:rRNA binding"/>
    <property type="evidence" value="ECO:0007669"/>
    <property type="project" value="UniProtKB-UniRule"/>
</dbReference>
<dbReference type="GO" id="GO:0003735">
    <property type="term" value="F:structural constituent of ribosome"/>
    <property type="evidence" value="ECO:0007669"/>
    <property type="project" value="InterPro"/>
</dbReference>
<dbReference type="GO" id="GO:0006412">
    <property type="term" value="P:translation"/>
    <property type="evidence" value="ECO:0007669"/>
    <property type="project" value="UniProtKB-UniRule"/>
</dbReference>
<dbReference type="FunFam" id="3.10.430.100:FF:000001">
    <property type="entry name" value="50S ribosomal protein L9"/>
    <property type="match status" value="1"/>
</dbReference>
<dbReference type="FunFam" id="3.40.5.10:FF:000001">
    <property type="entry name" value="50S ribosomal protein L9"/>
    <property type="match status" value="1"/>
</dbReference>
<dbReference type="Gene3D" id="3.10.430.100">
    <property type="entry name" value="Ribosomal protein L9, C-terminal domain"/>
    <property type="match status" value="1"/>
</dbReference>
<dbReference type="Gene3D" id="3.40.5.10">
    <property type="entry name" value="Ribosomal protein L9, N-terminal domain"/>
    <property type="match status" value="1"/>
</dbReference>
<dbReference type="HAMAP" id="MF_00503">
    <property type="entry name" value="Ribosomal_bL9"/>
    <property type="match status" value="1"/>
</dbReference>
<dbReference type="InterPro" id="IPR000244">
    <property type="entry name" value="Ribosomal_bL9"/>
</dbReference>
<dbReference type="InterPro" id="IPR009027">
    <property type="entry name" value="Ribosomal_bL9/RNase_H1_N"/>
</dbReference>
<dbReference type="InterPro" id="IPR020594">
    <property type="entry name" value="Ribosomal_bL9_bac/chp"/>
</dbReference>
<dbReference type="InterPro" id="IPR020069">
    <property type="entry name" value="Ribosomal_bL9_C"/>
</dbReference>
<dbReference type="InterPro" id="IPR036791">
    <property type="entry name" value="Ribosomal_bL9_C_sf"/>
</dbReference>
<dbReference type="InterPro" id="IPR020070">
    <property type="entry name" value="Ribosomal_bL9_N"/>
</dbReference>
<dbReference type="InterPro" id="IPR036935">
    <property type="entry name" value="Ribosomal_bL9_N_sf"/>
</dbReference>
<dbReference type="NCBIfam" id="TIGR00158">
    <property type="entry name" value="L9"/>
    <property type="match status" value="1"/>
</dbReference>
<dbReference type="PANTHER" id="PTHR21368">
    <property type="entry name" value="50S RIBOSOMAL PROTEIN L9"/>
    <property type="match status" value="1"/>
</dbReference>
<dbReference type="Pfam" id="PF03948">
    <property type="entry name" value="Ribosomal_L9_C"/>
    <property type="match status" value="1"/>
</dbReference>
<dbReference type="Pfam" id="PF01281">
    <property type="entry name" value="Ribosomal_L9_N"/>
    <property type="match status" value="1"/>
</dbReference>
<dbReference type="SUPFAM" id="SSF55658">
    <property type="entry name" value="L9 N-domain-like"/>
    <property type="match status" value="1"/>
</dbReference>
<dbReference type="SUPFAM" id="SSF55653">
    <property type="entry name" value="Ribosomal protein L9 C-domain"/>
    <property type="match status" value="1"/>
</dbReference>
<dbReference type="PROSITE" id="PS00651">
    <property type="entry name" value="RIBOSOMAL_L9"/>
    <property type="match status" value="1"/>
</dbReference>
<accession>Q31TD4</accession>
<name>RL9_SHIBS</name>
<sequence>MQVILLDKVANLGSLGDQVNVKAGYARNFLVPQGKAVPATKKNIEFFEARRAELEAKLAEVLAAANARAEKINALETVTIASKAGDEGKLFGSIGTRDIADAVTAAGVEVAKSEVRLPNGVLRTTGEHEVSFQVHSEVFAKVIVNVVAE</sequence>
<feature type="chain" id="PRO_0000236585" description="Large ribosomal subunit protein bL9">
    <location>
        <begin position="1"/>
        <end position="149"/>
    </location>
</feature>
<feature type="modified residue" description="N6-acetyllysine" evidence="1">
    <location>
        <position position="89"/>
    </location>
</feature>
<evidence type="ECO:0000255" key="1">
    <source>
        <dbReference type="HAMAP-Rule" id="MF_00503"/>
    </source>
</evidence>
<evidence type="ECO:0000305" key="2"/>
<organism>
    <name type="scientific">Shigella boydii serotype 4 (strain Sb227)</name>
    <dbReference type="NCBI Taxonomy" id="300268"/>
    <lineage>
        <taxon>Bacteria</taxon>
        <taxon>Pseudomonadati</taxon>
        <taxon>Pseudomonadota</taxon>
        <taxon>Gammaproteobacteria</taxon>
        <taxon>Enterobacterales</taxon>
        <taxon>Enterobacteriaceae</taxon>
        <taxon>Shigella</taxon>
    </lineage>
</organism>
<keyword id="KW-0007">Acetylation</keyword>
<keyword id="KW-0687">Ribonucleoprotein</keyword>
<keyword id="KW-0689">Ribosomal protein</keyword>
<keyword id="KW-0694">RNA-binding</keyword>
<keyword id="KW-0699">rRNA-binding</keyword>
<comment type="function">
    <text evidence="1">Binds to the 23S rRNA.</text>
</comment>
<comment type="similarity">
    <text evidence="1">Belongs to the bacterial ribosomal protein bL9 family.</text>
</comment>
<reference key="1">
    <citation type="journal article" date="2005" name="Nucleic Acids Res.">
        <title>Genome dynamics and diversity of Shigella species, the etiologic agents of bacillary dysentery.</title>
        <authorList>
            <person name="Yang F."/>
            <person name="Yang J."/>
            <person name="Zhang X."/>
            <person name="Chen L."/>
            <person name="Jiang Y."/>
            <person name="Yan Y."/>
            <person name="Tang X."/>
            <person name="Wang J."/>
            <person name="Xiong Z."/>
            <person name="Dong J."/>
            <person name="Xue Y."/>
            <person name="Zhu Y."/>
            <person name="Xu X."/>
            <person name="Sun L."/>
            <person name="Chen S."/>
            <person name="Nie H."/>
            <person name="Peng J."/>
            <person name="Xu J."/>
            <person name="Wang Y."/>
            <person name="Yuan Z."/>
            <person name="Wen Y."/>
            <person name="Yao Z."/>
            <person name="Shen Y."/>
            <person name="Qiang B."/>
            <person name="Hou Y."/>
            <person name="Yu J."/>
            <person name="Jin Q."/>
        </authorList>
    </citation>
    <scope>NUCLEOTIDE SEQUENCE [LARGE SCALE GENOMIC DNA]</scope>
    <source>
        <strain>Sb227</strain>
    </source>
</reference>
<proteinExistence type="inferred from homology"/>